<sequence length="526" mass="59762">MSAKAEYLQQEDFLHRSNKLQEISDLGINPYPYEFPGTSSVEEIKNEFSSQSLGNSEDATNKNTPKVKISGRMVLFRSMGKNAFAQILDNDQKIQVMFNRDFSSVAGLPEDAEITPIKFIEKKLDLGDILGIEGYLFFTHSGELTILVETVTLLGKALISLPDKHAGLSDKETRYRKRWLDLICSDEVRQTFLKRSRIIKLIRQYMDAQDFIEVETPILQNIYGGAEATPFVTTLNALHSDMFLRISLEIALKKILVGGTPRVYEIGKVFRNEGIDRTHNPEFTMIEAYAMNIDYHSVMVYVENLIEYLVGELNNGSTVLTYSHLKQGPQTIDFKAPWIRMTMKDSIKTYGGVDVDLHGDHELRNILKERSSLPEESYATAPRGLLIAALFDELVCDKLIAPHHITDHPLETTPLCKSLRSGEEDYVERFESFCLGKELCNAYSELTDPMRQRMLLEKQMEKKALDPDSEYHPIDEEFLEALCQGMPPAGGFGIGIDRLVMILTDSASIRDVLYFPVMRRLESEND</sequence>
<name>SYK_CHLFF</name>
<protein>
    <recommendedName>
        <fullName evidence="1">Lysine--tRNA ligase</fullName>
        <ecNumber evidence="1">6.1.1.6</ecNumber>
    </recommendedName>
    <alternativeName>
        <fullName evidence="1">Lysyl-tRNA synthetase</fullName>
        <shortName evidence="1">LysRS</shortName>
    </alternativeName>
</protein>
<organism>
    <name type="scientific">Chlamydia felis (strain Fe/C-56)</name>
    <name type="common">Chlamydophila felis</name>
    <dbReference type="NCBI Taxonomy" id="264202"/>
    <lineage>
        <taxon>Bacteria</taxon>
        <taxon>Pseudomonadati</taxon>
        <taxon>Chlamydiota</taxon>
        <taxon>Chlamydiia</taxon>
        <taxon>Chlamydiales</taxon>
        <taxon>Chlamydiaceae</taxon>
        <taxon>Chlamydia/Chlamydophila group</taxon>
        <taxon>Chlamydia</taxon>
    </lineage>
</organism>
<evidence type="ECO:0000255" key="1">
    <source>
        <dbReference type="HAMAP-Rule" id="MF_00252"/>
    </source>
</evidence>
<comment type="catalytic activity">
    <reaction evidence="1">
        <text>tRNA(Lys) + L-lysine + ATP = L-lysyl-tRNA(Lys) + AMP + diphosphate</text>
        <dbReference type="Rhea" id="RHEA:20792"/>
        <dbReference type="Rhea" id="RHEA-COMP:9696"/>
        <dbReference type="Rhea" id="RHEA-COMP:9697"/>
        <dbReference type="ChEBI" id="CHEBI:30616"/>
        <dbReference type="ChEBI" id="CHEBI:32551"/>
        <dbReference type="ChEBI" id="CHEBI:33019"/>
        <dbReference type="ChEBI" id="CHEBI:78442"/>
        <dbReference type="ChEBI" id="CHEBI:78529"/>
        <dbReference type="ChEBI" id="CHEBI:456215"/>
        <dbReference type="EC" id="6.1.1.6"/>
    </reaction>
</comment>
<comment type="cofactor">
    <cofactor evidence="1">
        <name>Mg(2+)</name>
        <dbReference type="ChEBI" id="CHEBI:18420"/>
    </cofactor>
    <text evidence="1">Binds 3 Mg(2+) ions per subunit.</text>
</comment>
<comment type="subunit">
    <text evidence="1">Homodimer.</text>
</comment>
<comment type="subcellular location">
    <subcellularLocation>
        <location evidence="1">Cytoplasm</location>
    </subcellularLocation>
</comment>
<comment type="similarity">
    <text evidence="1">Belongs to the class-II aminoacyl-tRNA synthetase family.</text>
</comment>
<reference key="1">
    <citation type="journal article" date="2006" name="DNA Res.">
        <title>Genome sequence of the cat pathogen, Chlamydophila felis.</title>
        <authorList>
            <person name="Azuma Y."/>
            <person name="Hirakawa H."/>
            <person name="Yamashita A."/>
            <person name="Cai Y."/>
            <person name="Rahman M.A."/>
            <person name="Suzuki H."/>
            <person name="Mitaku S."/>
            <person name="Toh H."/>
            <person name="Goto S."/>
            <person name="Murakami T."/>
            <person name="Sugi K."/>
            <person name="Hayashi H."/>
            <person name="Fukushi H."/>
            <person name="Hattori M."/>
            <person name="Kuhara S."/>
            <person name="Shirai M."/>
        </authorList>
    </citation>
    <scope>NUCLEOTIDE SEQUENCE [LARGE SCALE GENOMIC DNA]</scope>
    <source>
        <strain>Fe/C-56</strain>
    </source>
</reference>
<feature type="chain" id="PRO_1000012868" description="Lysine--tRNA ligase">
    <location>
        <begin position="1"/>
        <end position="526"/>
    </location>
</feature>
<feature type="binding site" evidence="1">
    <location>
        <position position="431"/>
    </location>
    <ligand>
        <name>Mg(2+)</name>
        <dbReference type="ChEBI" id="CHEBI:18420"/>
        <label>1</label>
    </ligand>
</feature>
<feature type="binding site" evidence="1">
    <location>
        <position position="438"/>
    </location>
    <ligand>
        <name>Mg(2+)</name>
        <dbReference type="ChEBI" id="CHEBI:18420"/>
        <label>1</label>
    </ligand>
</feature>
<feature type="binding site" evidence="1">
    <location>
        <position position="438"/>
    </location>
    <ligand>
        <name>Mg(2+)</name>
        <dbReference type="ChEBI" id="CHEBI:18420"/>
        <label>2</label>
    </ligand>
</feature>
<gene>
    <name evidence="1" type="primary">lysS</name>
    <name type="ordered locus">CF0174</name>
</gene>
<dbReference type="EC" id="6.1.1.6" evidence="1"/>
<dbReference type="EMBL" id="AP006861">
    <property type="protein sequence ID" value="BAE80946.1"/>
    <property type="molecule type" value="Genomic_DNA"/>
</dbReference>
<dbReference type="RefSeq" id="WP_011457731.1">
    <property type="nucleotide sequence ID" value="NC_007899.1"/>
</dbReference>
<dbReference type="SMR" id="Q255U2"/>
<dbReference type="STRING" id="264202.CF0174"/>
<dbReference type="KEGG" id="cfe:CF0174"/>
<dbReference type="eggNOG" id="COG1190">
    <property type="taxonomic scope" value="Bacteria"/>
</dbReference>
<dbReference type="HOGENOM" id="CLU_008255_6_0_0"/>
<dbReference type="OrthoDB" id="9802326at2"/>
<dbReference type="Proteomes" id="UP000001260">
    <property type="component" value="Chromosome"/>
</dbReference>
<dbReference type="GO" id="GO:0005829">
    <property type="term" value="C:cytosol"/>
    <property type="evidence" value="ECO:0007669"/>
    <property type="project" value="TreeGrafter"/>
</dbReference>
<dbReference type="GO" id="GO:0005524">
    <property type="term" value="F:ATP binding"/>
    <property type="evidence" value="ECO:0007669"/>
    <property type="project" value="UniProtKB-UniRule"/>
</dbReference>
<dbReference type="GO" id="GO:0004824">
    <property type="term" value="F:lysine-tRNA ligase activity"/>
    <property type="evidence" value="ECO:0007669"/>
    <property type="project" value="UniProtKB-UniRule"/>
</dbReference>
<dbReference type="GO" id="GO:0000287">
    <property type="term" value="F:magnesium ion binding"/>
    <property type="evidence" value="ECO:0007669"/>
    <property type="project" value="UniProtKB-UniRule"/>
</dbReference>
<dbReference type="GO" id="GO:0000049">
    <property type="term" value="F:tRNA binding"/>
    <property type="evidence" value="ECO:0007669"/>
    <property type="project" value="TreeGrafter"/>
</dbReference>
<dbReference type="GO" id="GO:0006430">
    <property type="term" value="P:lysyl-tRNA aminoacylation"/>
    <property type="evidence" value="ECO:0007669"/>
    <property type="project" value="UniProtKB-UniRule"/>
</dbReference>
<dbReference type="CDD" id="cd04322">
    <property type="entry name" value="LysRS_N"/>
    <property type="match status" value="1"/>
</dbReference>
<dbReference type="FunFam" id="2.40.50.140:FF:000024">
    <property type="entry name" value="Lysine--tRNA ligase"/>
    <property type="match status" value="1"/>
</dbReference>
<dbReference type="Gene3D" id="3.30.930.10">
    <property type="entry name" value="Bira Bifunctional Protein, Domain 2"/>
    <property type="match status" value="1"/>
</dbReference>
<dbReference type="Gene3D" id="2.40.50.140">
    <property type="entry name" value="Nucleic acid-binding proteins"/>
    <property type="match status" value="1"/>
</dbReference>
<dbReference type="HAMAP" id="MF_00252">
    <property type="entry name" value="Lys_tRNA_synth_class2"/>
    <property type="match status" value="1"/>
</dbReference>
<dbReference type="InterPro" id="IPR004364">
    <property type="entry name" value="Aa-tRNA-synt_II"/>
</dbReference>
<dbReference type="InterPro" id="IPR006195">
    <property type="entry name" value="aa-tRNA-synth_II"/>
</dbReference>
<dbReference type="InterPro" id="IPR045864">
    <property type="entry name" value="aa-tRNA-synth_II/BPL/LPL"/>
</dbReference>
<dbReference type="InterPro" id="IPR002313">
    <property type="entry name" value="Lys-tRNA-ligase_II"/>
</dbReference>
<dbReference type="InterPro" id="IPR044136">
    <property type="entry name" value="Lys-tRNA-ligase_II_N"/>
</dbReference>
<dbReference type="InterPro" id="IPR018149">
    <property type="entry name" value="Lys-tRNA-synth_II_C"/>
</dbReference>
<dbReference type="InterPro" id="IPR012340">
    <property type="entry name" value="NA-bd_OB-fold"/>
</dbReference>
<dbReference type="InterPro" id="IPR004365">
    <property type="entry name" value="NA-bd_OB_tRNA"/>
</dbReference>
<dbReference type="NCBIfam" id="TIGR00499">
    <property type="entry name" value="lysS_bact"/>
    <property type="match status" value="1"/>
</dbReference>
<dbReference type="NCBIfam" id="NF001756">
    <property type="entry name" value="PRK00484.1"/>
    <property type="match status" value="1"/>
</dbReference>
<dbReference type="PANTHER" id="PTHR42918:SF15">
    <property type="entry name" value="LYSINE--TRNA LIGASE, CHLOROPLASTIC_MITOCHONDRIAL"/>
    <property type="match status" value="1"/>
</dbReference>
<dbReference type="PANTHER" id="PTHR42918">
    <property type="entry name" value="LYSYL-TRNA SYNTHETASE"/>
    <property type="match status" value="1"/>
</dbReference>
<dbReference type="Pfam" id="PF00152">
    <property type="entry name" value="tRNA-synt_2"/>
    <property type="match status" value="1"/>
</dbReference>
<dbReference type="Pfam" id="PF01336">
    <property type="entry name" value="tRNA_anti-codon"/>
    <property type="match status" value="1"/>
</dbReference>
<dbReference type="PRINTS" id="PR00982">
    <property type="entry name" value="TRNASYNTHLYS"/>
</dbReference>
<dbReference type="SUPFAM" id="SSF55681">
    <property type="entry name" value="Class II aaRS and biotin synthetases"/>
    <property type="match status" value="1"/>
</dbReference>
<dbReference type="SUPFAM" id="SSF50249">
    <property type="entry name" value="Nucleic acid-binding proteins"/>
    <property type="match status" value="1"/>
</dbReference>
<dbReference type="PROSITE" id="PS50862">
    <property type="entry name" value="AA_TRNA_LIGASE_II"/>
    <property type="match status" value="1"/>
</dbReference>
<keyword id="KW-0030">Aminoacyl-tRNA synthetase</keyword>
<keyword id="KW-0067">ATP-binding</keyword>
<keyword id="KW-0963">Cytoplasm</keyword>
<keyword id="KW-0436">Ligase</keyword>
<keyword id="KW-0460">Magnesium</keyword>
<keyword id="KW-0479">Metal-binding</keyword>
<keyword id="KW-0547">Nucleotide-binding</keyword>
<keyword id="KW-0648">Protein biosynthesis</keyword>
<proteinExistence type="inferred from homology"/>
<accession>Q255U2</accession>